<proteinExistence type="inferred from homology"/>
<sequence>MLKNLKDLTLEDMKVKRLTLKKEYMDLRFKTVVGHVENPLKKRELRRDIARLNTIIHEYAIGIRKV</sequence>
<reference key="1">
    <citation type="journal article" date="2008" name="PLoS Genet.">
        <title>The genome of Borrelia recurrentis, the agent of deadly louse-borne relapsing fever, is a degraded subset of tick-borne Borrelia duttonii.</title>
        <authorList>
            <person name="Lescot M."/>
            <person name="Audic S."/>
            <person name="Robert C."/>
            <person name="Nguyen T.T."/>
            <person name="Blanc G."/>
            <person name="Cutler S.J."/>
            <person name="Wincker P."/>
            <person name="Couloux A."/>
            <person name="Claverie J.-M."/>
            <person name="Raoult D."/>
            <person name="Drancourt M."/>
        </authorList>
    </citation>
    <scope>NUCLEOTIDE SEQUENCE [LARGE SCALE GENOMIC DNA]</scope>
    <source>
        <strain>A1</strain>
    </source>
</reference>
<dbReference type="EMBL" id="CP000993">
    <property type="protein sequence ID" value="ACH94724.1"/>
    <property type="molecule type" value="Genomic_DNA"/>
</dbReference>
<dbReference type="RefSeq" id="WP_012538937.1">
    <property type="nucleotide sequence ID" value="NC_011244.1"/>
</dbReference>
<dbReference type="SMR" id="B5RPJ0"/>
<dbReference type="KEGG" id="bre:BRE_492"/>
<dbReference type="HOGENOM" id="CLU_158491_5_0_12"/>
<dbReference type="Proteomes" id="UP000000612">
    <property type="component" value="Chromosome"/>
</dbReference>
<dbReference type="GO" id="GO:1990904">
    <property type="term" value="C:ribonucleoprotein complex"/>
    <property type="evidence" value="ECO:0007669"/>
    <property type="project" value="UniProtKB-KW"/>
</dbReference>
<dbReference type="GO" id="GO:0005840">
    <property type="term" value="C:ribosome"/>
    <property type="evidence" value="ECO:0007669"/>
    <property type="project" value="UniProtKB-KW"/>
</dbReference>
<dbReference type="GO" id="GO:0003735">
    <property type="term" value="F:structural constituent of ribosome"/>
    <property type="evidence" value="ECO:0007669"/>
    <property type="project" value="InterPro"/>
</dbReference>
<dbReference type="GO" id="GO:0006412">
    <property type="term" value="P:translation"/>
    <property type="evidence" value="ECO:0007669"/>
    <property type="project" value="UniProtKB-UniRule"/>
</dbReference>
<dbReference type="CDD" id="cd00427">
    <property type="entry name" value="Ribosomal_L29_HIP"/>
    <property type="match status" value="1"/>
</dbReference>
<dbReference type="Gene3D" id="1.10.287.310">
    <property type="match status" value="1"/>
</dbReference>
<dbReference type="HAMAP" id="MF_00374">
    <property type="entry name" value="Ribosomal_uL29"/>
    <property type="match status" value="1"/>
</dbReference>
<dbReference type="InterPro" id="IPR001854">
    <property type="entry name" value="Ribosomal_uL29"/>
</dbReference>
<dbReference type="InterPro" id="IPR036049">
    <property type="entry name" value="Ribosomal_uL29_sf"/>
</dbReference>
<dbReference type="NCBIfam" id="TIGR00012">
    <property type="entry name" value="L29"/>
    <property type="match status" value="1"/>
</dbReference>
<dbReference type="Pfam" id="PF00831">
    <property type="entry name" value="Ribosomal_L29"/>
    <property type="match status" value="1"/>
</dbReference>
<dbReference type="SUPFAM" id="SSF46561">
    <property type="entry name" value="Ribosomal protein L29 (L29p)"/>
    <property type="match status" value="1"/>
</dbReference>
<organism>
    <name type="scientific">Borrelia recurrentis (strain A1)</name>
    <dbReference type="NCBI Taxonomy" id="412418"/>
    <lineage>
        <taxon>Bacteria</taxon>
        <taxon>Pseudomonadati</taxon>
        <taxon>Spirochaetota</taxon>
        <taxon>Spirochaetia</taxon>
        <taxon>Spirochaetales</taxon>
        <taxon>Borreliaceae</taxon>
        <taxon>Borrelia</taxon>
    </lineage>
</organism>
<feature type="chain" id="PRO_1000121737" description="Large ribosomal subunit protein uL29">
    <location>
        <begin position="1"/>
        <end position="66"/>
    </location>
</feature>
<comment type="similarity">
    <text evidence="1">Belongs to the universal ribosomal protein uL29 family.</text>
</comment>
<evidence type="ECO:0000255" key="1">
    <source>
        <dbReference type="HAMAP-Rule" id="MF_00374"/>
    </source>
</evidence>
<evidence type="ECO:0000305" key="2"/>
<protein>
    <recommendedName>
        <fullName evidence="1">Large ribosomal subunit protein uL29</fullName>
    </recommendedName>
    <alternativeName>
        <fullName evidence="2">50S ribosomal protein L29</fullName>
    </alternativeName>
</protein>
<gene>
    <name evidence="1" type="primary">rpmC</name>
    <name type="ordered locus">BRE_492</name>
</gene>
<keyword id="KW-0687">Ribonucleoprotein</keyword>
<keyword id="KW-0689">Ribosomal protein</keyword>
<name>RL29_BORRA</name>
<accession>B5RPJ0</accession>